<keyword id="KW-0002">3D-structure</keyword>
<keyword id="KW-0963">Cytoplasm</keyword>
<keyword id="KW-0238">DNA-binding</keyword>
<keyword id="KW-0479">Metal-binding</keyword>
<keyword id="KW-0539">Nucleus</keyword>
<keyword id="KW-1185">Reference proteome</keyword>
<keyword id="KW-0804">Transcription</keyword>
<keyword id="KW-0805">Transcription regulation</keyword>
<keyword id="KW-0862">Zinc</keyword>
<keyword id="KW-0863">Zinc-finger</keyword>
<reference key="1">
    <citation type="journal article" date="1999" name="Gene">
        <title>Molecular characterization of the Arabidopsis SBP-box genes.</title>
        <authorList>
            <person name="Cardon G.H."/>
            <person name="Hoehmann S."/>
            <person name="Klein J."/>
            <person name="Nettesheim K."/>
            <person name="Saedler H."/>
            <person name="Huijser P."/>
        </authorList>
    </citation>
    <scope>NUCLEOTIDE SEQUENCE [GENOMIC DNA / MRNA]</scope>
    <scope>FUNCTION</scope>
    <scope>TISSUE SPECIFICITY</scope>
    <scope>DEVELOPMENTAL STAGE</scope>
    <source>
        <strain>cv. Columbia</strain>
        <strain>cv. Landsberg erecta</strain>
        <tissue>Flower</tissue>
    </source>
</reference>
<reference key="2">
    <citation type="journal article" date="2000" name="DNA Res.">
        <title>Structural analysis of Arabidopsis thaliana chromosome 3. II. Sequence features of the 4,251,695 bp regions covered by 90 P1, TAC and BAC clones.</title>
        <authorList>
            <person name="Kaneko T."/>
            <person name="Katoh T."/>
            <person name="Sato S."/>
            <person name="Nakamura Y."/>
            <person name="Asamizu E."/>
            <person name="Tabata S."/>
        </authorList>
    </citation>
    <scope>NUCLEOTIDE SEQUENCE [LARGE SCALE GENOMIC DNA]</scope>
    <source>
        <strain>cv. Columbia</strain>
    </source>
</reference>
<reference key="3">
    <citation type="journal article" date="2017" name="Plant J.">
        <title>Araport11: a complete reannotation of the Arabidopsis thaliana reference genome.</title>
        <authorList>
            <person name="Cheng C.Y."/>
            <person name="Krishnakumar V."/>
            <person name="Chan A.P."/>
            <person name="Thibaud-Nissen F."/>
            <person name="Schobel S."/>
            <person name="Town C.D."/>
        </authorList>
    </citation>
    <scope>GENOME REANNOTATION</scope>
    <source>
        <strain>cv. Columbia</strain>
    </source>
</reference>
<reference key="4">
    <citation type="journal article" date="2002" name="Science">
        <title>Functional annotation of a full-length Arabidopsis cDNA collection.</title>
        <authorList>
            <person name="Seki M."/>
            <person name="Narusaka M."/>
            <person name="Kamiya A."/>
            <person name="Ishida J."/>
            <person name="Satou M."/>
            <person name="Sakurai T."/>
            <person name="Nakajima M."/>
            <person name="Enju A."/>
            <person name="Akiyama K."/>
            <person name="Oono Y."/>
            <person name="Muramatsu M."/>
            <person name="Hayashizaki Y."/>
            <person name="Kawai J."/>
            <person name="Carninci P."/>
            <person name="Itoh M."/>
            <person name="Ishii Y."/>
            <person name="Arakawa T."/>
            <person name="Shibata K."/>
            <person name="Shinagawa A."/>
            <person name="Shinozaki K."/>
        </authorList>
    </citation>
    <scope>NUCLEOTIDE SEQUENCE [LARGE SCALE MRNA]</scope>
    <source>
        <strain>cv. Columbia</strain>
    </source>
</reference>
<reference key="5">
    <citation type="journal article" date="2003" name="Science">
        <title>Empirical analysis of transcriptional activity in the Arabidopsis genome.</title>
        <authorList>
            <person name="Yamada K."/>
            <person name="Lim J."/>
            <person name="Dale J.M."/>
            <person name="Chen H."/>
            <person name="Shinn P."/>
            <person name="Palm C.J."/>
            <person name="Southwick A.M."/>
            <person name="Wu H.C."/>
            <person name="Kim C.J."/>
            <person name="Nguyen M."/>
            <person name="Pham P.K."/>
            <person name="Cheuk R.F."/>
            <person name="Karlin-Newmann G."/>
            <person name="Liu S.X."/>
            <person name="Lam B."/>
            <person name="Sakano H."/>
            <person name="Wu T."/>
            <person name="Yu G."/>
            <person name="Miranda M."/>
            <person name="Quach H.L."/>
            <person name="Tripp M."/>
            <person name="Chang C.H."/>
            <person name="Lee J.M."/>
            <person name="Toriumi M.J."/>
            <person name="Chan M.M."/>
            <person name="Tang C.C."/>
            <person name="Onodera C.S."/>
            <person name="Deng J.M."/>
            <person name="Akiyama K."/>
            <person name="Ansari Y."/>
            <person name="Arakawa T."/>
            <person name="Banh J."/>
            <person name="Banno F."/>
            <person name="Bowser L."/>
            <person name="Brooks S.Y."/>
            <person name="Carninci P."/>
            <person name="Chao Q."/>
            <person name="Choy N."/>
            <person name="Enju A."/>
            <person name="Goldsmith A.D."/>
            <person name="Gurjal M."/>
            <person name="Hansen N.F."/>
            <person name="Hayashizaki Y."/>
            <person name="Johnson-Hopson C."/>
            <person name="Hsuan V.W."/>
            <person name="Iida K."/>
            <person name="Karnes M."/>
            <person name="Khan S."/>
            <person name="Koesema E."/>
            <person name="Ishida J."/>
            <person name="Jiang P.X."/>
            <person name="Jones T."/>
            <person name="Kawai J."/>
            <person name="Kamiya A."/>
            <person name="Meyers C."/>
            <person name="Nakajima M."/>
            <person name="Narusaka M."/>
            <person name="Seki M."/>
            <person name="Sakurai T."/>
            <person name="Satou M."/>
            <person name="Tamse R."/>
            <person name="Vaysberg M."/>
            <person name="Wallender E.K."/>
            <person name="Wong C."/>
            <person name="Yamamura Y."/>
            <person name="Yuan S."/>
            <person name="Shinozaki K."/>
            <person name="Davis R.W."/>
            <person name="Theologis A."/>
            <person name="Ecker J.R."/>
        </authorList>
    </citation>
    <scope>NUCLEOTIDE SEQUENCE [LARGE SCALE MRNA]</scope>
    <source>
        <strain>cv. Columbia</strain>
    </source>
</reference>
<reference key="6">
    <citation type="journal article" date="2003" name="Development">
        <title>Dissection of floral induction pathways using global expression analysis.</title>
        <authorList>
            <person name="Schmid M."/>
            <person name="Uhlenhaut N.H."/>
            <person name="Godard F."/>
            <person name="Demar M."/>
            <person name="Bressan R."/>
            <person name="Weigel D."/>
            <person name="Lohmann J.U."/>
        </authorList>
    </citation>
    <scope>DEVELOPMENTAL STAGE</scope>
</reference>
<reference key="7">
    <citation type="journal article" date="2005" name="J. Mol. Biol.">
        <title>Functional dissection of the plant-specific SBP-domain: overlap of the DNA-binding and nuclear localization domains.</title>
        <authorList>
            <person name="Birkenbihl R.P."/>
            <person name="Jach G."/>
            <person name="Saedler H."/>
            <person name="Huijser P."/>
        </authorList>
    </citation>
    <scope>SUBCELLULAR LOCATION</scope>
</reference>
<reference key="8">
    <citation type="journal article" date="2006" name="Development">
        <title>Temporal regulation of shoot development in Arabidopsis thaliana by miR156 and its target SPL3.</title>
        <authorList>
            <person name="Wu G."/>
            <person name="Poethig R.S."/>
        </authorList>
    </citation>
    <scope>FUNCTION</scope>
    <scope>INDUCTION</scope>
</reference>
<evidence type="ECO:0000250" key="1"/>
<evidence type="ECO:0000255" key="2"/>
<evidence type="ECO:0000255" key="3">
    <source>
        <dbReference type="PROSITE-ProRule" id="PRU00470"/>
    </source>
</evidence>
<evidence type="ECO:0000256" key="4">
    <source>
        <dbReference type="SAM" id="MobiDB-lite"/>
    </source>
</evidence>
<evidence type="ECO:0000269" key="5">
    <source>
    </source>
</evidence>
<evidence type="ECO:0000269" key="6">
    <source>
    </source>
</evidence>
<evidence type="ECO:0000269" key="7">
    <source>
    </source>
</evidence>
<evidence type="ECO:0000269" key="8">
    <source>
    </source>
</evidence>
<evidence type="ECO:0007829" key="9">
    <source>
        <dbReference type="PDB" id="8J49"/>
    </source>
</evidence>
<evidence type="ECO:0007829" key="10">
    <source>
        <dbReference type="PDB" id="8PFC"/>
    </source>
</evidence>
<accession>Q9S758</accession>
<accession>Q9SMW8</accession>
<protein>
    <recommendedName>
        <fullName>Squamosa promoter-binding-like protein 5</fullName>
    </recommendedName>
</protein>
<organism>
    <name type="scientific">Arabidopsis thaliana</name>
    <name type="common">Mouse-ear cress</name>
    <dbReference type="NCBI Taxonomy" id="3702"/>
    <lineage>
        <taxon>Eukaryota</taxon>
        <taxon>Viridiplantae</taxon>
        <taxon>Streptophyta</taxon>
        <taxon>Embryophyta</taxon>
        <taxon>Tracheophyta</taxon>
        <taxon>Spermatophyta</taxon>
        <taxon>Magnoliopsida</taxon>
        <taxon>eudicotyledons</taxon>
        <taxon>Gunneridae</taxon>
        <taxon>Pentapetalae</taxon>
        <taxon>rosids</taxon>
        <taxon>malvids</taxon>
        <taxon>Brassicales</taxon>
        <taxon>Brassicaceae</taxon>
        <taxon>Camelineae</taxon>
        <taxon>Arabidopsis</taxon>
    </lineage>
</organism>
<sequence>MEGQRTQRRGYLKDKATVSNLVEEEMENGMDGEEEDGGDEDKRKKVMERVRGPSTDRVPSRLCQVDRCTVNLTEAKQYYRRHRVCEVHAKASAATVAGVRQRFCQQCSRFHELPEFDEAKRSCRRRLAGHNERRRKISGDSFGEGSGRRGFSGQLIQTQERNRVDRKLPMTNSSFKRPQIR</sequence>
<dbReference type="EMBL" id="AJ011609">
    <property type="protein sequence ID" value="CAB56571.1"/>
    <property type="molecule type" value="Genomic_DNA"/>
</dbReference>
<dbReference type="EMBL" id="AJ011610">
    <property type="protein sequence ID" value="CAB56572.1"/>
    <property type="molecule type" value="mRNA"/>
</dbReference>
<dbReference type="EMBL" id="AJ242960">
    <property type="protein sequence ID" value="CAB56772.1"/>
    <property type="status" value="ALT_SEQ"/>
    <property type="molecule type" value="mRNA"/>
</dbReference>
<dbReference type="EMBL" id="AP000413">
    <property type="protein sequence ID" value="BAB02156.1"/>
    <property type="molecule type" value="Genomic_DNA"/>
</dbReference>
<dbReference type="EMBL" id="CP002686">
    <property type="protein sequence ID" value="AEE75639.1"/>
    <property type="molecule type" value="Genomic_DNA"/>
</dbReference>
<dbReference type="EMBL" id="AK118611">
    <property type="protein sequence ID" value="BAC43210.1"/>
    <property type="molecule type" value="mRNA"/>
</dbReference>
<dbReference type="EMBL" id="BT003714">
    <property type="protein sequence ID" value="AAO39942.1"/>
    <property type="molecule type" value="mRNA"/>
</dbReference>
<dbReference type="PIR" id="T52567">
    <property type="entry name" value="T52567"/>
</dbReference>
<dbReference type="PIR" id="T52607">
    <property type="entry name" value="T52607"/>
</dbReference>
<dbReference type="RefSeq" id="NP_188145.1">
    <property type="nucleotide sequence ID" value="NM_112390.5"/>
</dbReference>
<dbReference type="PDB" id="8J49">
    <property type="method" value="X-ray"/>
    <property type="resolution" value="1.66 A"/>
    <property type="chains" value="A=60-124"/>
</dbReference>
<dbReference type="PDB" id="8PFC">
    <property type="method" value="X-ray"/>
    <property type="resolution" value="2.20 A"/>
    <property type="chains" value="B/D/F/H/J/L/N/P=59-127"/>
</dbReference>
<dbReference type="PDBsum" id="8J49"/>
<dbReference type="PDBsum" id="8PFC"/>
<dbReference type="SMR" id="Q9S758"/>
<dbReference type="BioGRID" id="6092">
    <property type="interactions" value="2"/>
</dbReference>
<dbReference type="FunCoup" id="Q9S758">
    <property type="interactions" value="18"/>
</dbReference>
<dbReference type="STRING" id="3702.Q9S758"/>
<dbReference type="iPTMnet" id="Q9S758"/>
<dbReference type="PaxDb" id="3702-AT3G15270.1"/>
<dbReference type="ProteomicsDB" id="228369"/>
<dbReference type="EnsemblPlants" id="AT3G15270.1">
    <property type="protein sequence ID" value="AT3G15270.1"/>
    <property type="gene ID" value="AT3G15270"/>
</dbReference>
<dbReference type="GeneID" id="820758"/>
<dbReference type="Gramene" id="AT3G15270.1">
    <property type="protein sequence ID" value="AT3G15270.1"/>
    <property type="gene ID" value="AT3G15270"/>
</dbReference>
<dbReference type="KEGG" id="ath:AT3G15270"/>
<dbReference type="Araport" id="AT3G15270"/>
<dbReference type="TAIR" id="AT3G15270">
    <property type="gene designation" value="SPL5"/>
</dbReference>
<dbReference type="eggNOG" id="ENOG502RZTN">
    <property type="taxonomic scope" value="Eukaryota"/>
</dbReference>
<dbReference type="HOGENOM" id="CLU_065896_0_0_1"/>
<dbReference type="InParanoid" id="Q9S758"/>
<dbReference type="OMA" id="VPSRLCQ"/>
<dbReference type="PhylomeDB" id="Q9S758"/>
<dbReference type="PRO" id="PR:Q9S758"/>
<dbReference type="Proteomes" id="UP000006548">
    <property type="component" value="Chromosome 3"/>
</dbReference>
<dbReference type="ExpressionAtlas" id="Q9S758">
    <property type="expression patterns" value="baseline and differential"/>
</dbReference>
<dbReference type="GO" id="GO:0005737">
    <property type="term" value="C:cytoplasm"/>
    <property type="evidence" value="ECO:0007669"/>
    <property type="project" value="UniProtKB-SubCell"/>
</dbReference>
<dbReference type="GO" id="GO:0005634">
    <property type="term" value="C:nucleus"/>
    <property type="evidence" value="ECO:0007669"/>
    <property type="project" value="UniProtKB-SubCell"/>
</dbReference>
<dbReference type="GO" id="GO:0003677">
    <property type="term" value="F:DNA binding"/>
    <property type="evidence" value="ECO:0007669"/>
    <property type="project" value="UniProtKB-KW"/>
</dbReference>
<dbReference type="GO" id="GO:0003700">
    <property type="term" value="F:DNA-binding transcription factor activity"/>
    <property type="evidence" value="ECO:0000250"/>
    <property type="project" value="TAIR"/>
</dbReference>
<dbReference type="GO" id="GO:0008270">
    <property type="term" value="F:zinc ion binding"/>
    <property type="evidence" value="ECO:0007669"/>
    <property type="project" value="UniProtKB-KW"/>
</dbReference>
<dbReference type="GO" id="GO:0006355">
    <property type="term" value="P:regulation of DNA-templated transcription"/>
    <property type="evidence" value="ECO:0000304"/>
    <property type="project" value="TAIR"/>
</dbReference>
<dbReference type="GO" id="GO:0010321">
    <property type="term" value="P:regulation of vegetative phase change"/>
    <property type="evidence" value="ECO:0000315"/>
    <property type="project" value="TAIR"/>
</dbReference>
<dbReference type="FunFam" id="4.10.1100.10:FF:000001">
    <property type="entry name" value="Squamosa promoter-binding-like protein 14"/>
    <property type="match status" value="1"/>
</dbReference>
<dbReference type="Gene3D" id="4.10.1100.10">
    <property type="entry name" value="Transcription factor, SBP-box domain"/>
    <property type="match status" value="1"/>
</dbReference>
<dbReference type="InterPro" id="IPR044817">
    <property type="entry name" value="SBP-like"/>
</dbReference>
<dbReference type="InterPro" id="IPR004333">
    <property type="entry name" value="SBP_dom"/>
</dbReference>
<dbReference type="InterPro" id="IPR036893">
    <property type="entry name" value="SBP_sf"/>
</dbReference>
<dbReference type="PANTHER" id="PTHR31251">
    <property type="entry name" value="SQUAMOSA PROMOTER-BINDING-LIKE PROTEIN 4"/>
    <property type="match status" value="1"/>
</dbReference>
<dbReference type="PANTHER" id="PTHR31251:SF81">
    <property type="entry name" value="SQUAMOSA PROMOTER-BINDING-LIKE PROTEIN 5"/>
    <property type="match status" value="1"/>
</dbReference>
<dbReference type="Pfam" id="PF03110">
    <property type="entry name" value="SBP"/>
    <property type="match status" value="1"/>
</dbReference>
<dbReference type="SUPFAM" id="SSF103612">
    <property type="entry name" value="SBT domain"/>
    <property type="match status" value="1"/>
</dbReference>
<dbReference type="PROSITE" id="PS51141">
    <property type="entry name" value="ZF_SBP"/>
    <property type="match status" value="1"/>
</dbReference>
<proteinExistence type="evidence at protein level"/>
<gene>
    <name type="primary">SPL5</name>
    <name type="ordered locus">At3g15270</name>
    <name type="ORF">K7L4.7</name>
</gene>
<name>SPL5_ARATH</name>
<comment type="function">
    <text evidence="5 8">Trans-acting factor that binds specifically to the consensus nucleotide sequence 5'-TNCGTACAA-3' of AP1 promoter. Promotes both vegetative phase change and flowering.</text>
</comment>
<comment type="cofactor">
    <cofactor evidence="1">
        <name>Zn(2+)</name>
        <dbReference type="ChEBI" id="CHEBI:29105"/>
    </cofactor>
    <text evidence="1">Binds 2 Zn(2+) ions per subunit.</text>
</comment>
<comment type="subcellular location">
    <subcellularLocation>
        <location evidence="7">Nucleus</location>
    </subcellularLocation>
    <subcellularLocation>
        <location evidence="7">Cytoplasm</location>
    </subcellularLocation>
    <text>Mostly located in nucleus.</text>
</comment>
<comment type="tissue specificity">
    <text evidence="5">Expressed in the inflorescence apical meristem and young flowers.</text>
</comment>
<comment type="developmental stage">
    <text evidence="5 6">Increases during floral transition and stay high thereafter.</text>
</comment>
<comment type="induction">
    <text evidence="8">Negatively regulated by microRNAs miR156.</text>
</comment>
<comment type="domain">
    <text evidence="1">The SBP-type zinc finger is required for the binding to DNA.</text>
</comment>
<feature type="chain" id="PRO_0000132726" description="Squamosa promoter-binding-like protein 5">
    <location>
        <begin position="1"/>
        <end position="181"/>
    </location>
</feature>
<feature type="zinc finger region" description="SBP-type" evidence="3">
    <location>
        <begin position="60"/>
        <end position="137"/>
    </location>
</feature>
<feature type="region of interest" description="Disordered" evidence="4">
    <location>
        <begin position="1"/>
        <end position="58"/>
    </location>
</feature>
<feature type="region of interest" description="Disordered" evidence="4">
    <location>
        <begin position="128"/>
        <end position="181"/>
    </location>
</feature>
<feature type="short sequence motif" description="Bipartite nuclear localization signal" evidence="2">
    <location>
        <begin position="120"/>
        <end position="136"/>
    </location>
</feature>
<feature type="compositionally biased region" description="Basic residues" evidence="4">
    <location>
        <begin position="1"/>
        <end position="10"/>
    </location>
</feature>
<feature type="compositionally biased region" description="Acidic residues" evidence="4">
    <location>
        <begin position="22"/>
        <end position="39"/>
    </location>
</feature>
<feature type="compositionally biased region" description="Basic and acidic residues" evidence="4">
    <location>
        <begin position="40"/>
        <end position="51"/>
    </location>
</feature>
<feature type="compositionally biased region" description="Polar residues" evidence="4">
    <location>
        <begin position="170"/>
        <end position="181"/>
    </location>
</feature>
<feature type="binding site" evidence="3">
    <location>
        <position position="63"/>
    </location>
    <ligand>
        <name>Zn(2+)</name>
        <dbReference type="ChEBI" id="CHEBI:29105"/>
        <label>1</label>
    </ligand>
</feature>
<feature type="binding site" evidence="3">
    <location>
        <position position="68"/>
    </location>
    <ligand>
        <name>Zn(2+)</name>
        <dbReference type="ChEBI" id="CHEBI:29105"/>
        <label>1</label>
    </ligand>
</feature>
<feature type="binding site" evidence="3">
    <location>
        <position position="85"/>
    </location>
    <ligand>
        <name>Zn(2+)</name>
        <dbReference type="ChEBI" id="CHEBI:29105"/>
        <label>1</label>
    </ligand>
</feature>
<feature type="binding site" evidence="3">
    <location>
        <position position="88"/>
    </location>
    <ligand>
        <name>Zn(2+)</name>
        <dbReference type="ChEBI" id="CHEBI:29105"/>
        <label>1</label>
    </ligand>
</feature>
<feature type="binding site" evidence="3">
    <location>
        <position position="104"/>
    </location>
    <ligand>
        <name>Zn(2+)</name>
        <dbReference type="ChEBI" id="CHEBI:29105"/>
        <label>2</label>
    </ligand>
</feature>
<feature type="binding site" evidence="3">
    <location>
        <position position="107"/>
    </location>
    <ligand>
        <name>Zn(2+)</name>
        <dbReference type="ChEBI" id="CHEBI:29105"/>
        <label>2</label>
    </ligand>
</feature>
<feature type="binding site" evidence="3">
    <location>
        <position position="111"/>
    </location>
    <ligand>
        <name>Zn(2+)</name>
        <dbReference type="ChEBI" id="CHEBI:29105"/>
        <label>2</label>
    </ligand>
</feature>
<feature type="binding site" evidence="3">
    <location>
        <position position="123"/>
    </location>
    <ligand>
        <name>Zn(2+)</name>
        <dbReference type="ChEBI" id="CHEBI:29105"/>
        <label>2</label>
    </ligand>
</feature>
<feature type="strand" evidence="10">
    <location>
        <begin position="63"/>
        <end position="65"/>
    </location>
</feature>
<feature type="helix" evidence="10">
    <location>
        <begin position="72"/>
        <end position="74"/>
    </location>
</feature>
<feature type="helix" evidence="9">
    <location>
        <begin position="77"/>
        <end position="82"/>
    </location>
</feature>
<feature type="helix" evidence="9">
    <location>
        <begin position="86"/>
        <end position="90"/>
    </location>
</feature>
<feature type="strand" evidence="9">
    <location>
        <begin position="94"/>
        <end position="96"/>
    </location>
</feature>
<feature type="strand" evidence="9">
    <location>
        <begin position="99"/>
        <end position="104"/>
    </location>
</feature>
<feature type="turn" evidence="9">
    <location>
        <begin position="105"/>
        <end position="108"/>
    </location>
</feature>
<feature type="strand" evidence="9">
    <location>
        <begin position="109"/>
        <end position="112"/>
    </location>
</feature>
<feature type="helix" evidence="9">
    <location>
        <begin position="113"/>
        <end position="115"/>
    </location>
</feature>